<sequence>TKATEGEFLAEGGGVR</sequence>
<gene>
    <name type="primary">FGA</name>
</gene>
<proteinExistence type="evidence at protein level"/>
<organism>
    <name type="scientific">Tapirus terrestris</name>
    <name type="common">Lowland tapir</name>
    <name type="synonym">Brazilian tapir</name>
    <dbReference type="NCBI Taxonomy" id="9801"/>
    <lineage>
        <taxon>Eukaryota</taxon>
        <taxon>Metazoa</taxon>
        <taxon>Chordata</taxon>
        <taxon>Craniata</taxon>
        <taxon>Vertebrata</taxon>
        <taxon>Euteleostomi</taxon>
        <taxon>Mammalia</taxon>
        <taxon>Eutheria</taxon>
        <taxon>Laurasiatheria</taxon>
        <taxon>Perissodactyla</taxon>
        <taxon>Tapiridae</taxon>
        <taxon>Tapirus</taxon>
    </lineage>
</organism>
<comment type="function">
    <text evidence="1">Cleaved by the protease thrombin to yield monomers which, together with fibrinogen beta (FGB) and fibrinogen gamma (FGG), polymerize to form an insoluble fibrin matrix. Fibrin has a major function in hemostasis as one of the primary components of blood clots. In addition, functions during the early stages of wound repair to stabilize the lesion and guide cell migration during re-epithelialization. Was originally thought to be essential for platelet aggregation, based on in vitro studies using anticoagulated blood. However, subsequent studies have shown that it is not absolutely required for thrombus formation in vivo. Enhances expression of SELP in activated platelets via an ITGB3-dependent pathway. Maternal fibrinogen is essential for successful pregnancy. Fibrin deposition is also associated with infection, where it protects against IFNG-mediated hemorrhage. May also facilitate the immune response via both innate and T-cell mediated pathways.</text>
</comment>
<comment type="subunit">
    <text evidence="2">Heterohexamer; disulfide linked. Contains 2 sets of 3 non-identical chains (alpha, beta and gamma). The 2 heterotrimers are in head to head conformation with the N-termini in a small central domain (By similarity).</text>
</comment>
<comment type="subcellular location">
    <subcellularLocation>
        <location>Secreted</location>
    </subcellularLocation>
</comment>
<comment type="domain">
    <text evidence="2">A long coiled coil structure formed by 3 polypeptide chains connects the central nodule to the C-terminal domains (distal nodules). The long C-terminal ends of the alpha chains fold back, contributing a fourth strand to the coiled coil structure.</text>
</comment>
<comment type="PTM">
    <text>Conversion of fibrinogen to fibrin is triggered by thrombin, which cleaves fibrinopeptides A and B from alpha and beta chains, and thus exposes the N-terminal polymerization sites responsible for the formation of the soft clot. The soft clot is converted into the hard clot by factor XIIIA which catalyzes the epsilon-(gamma-glutamyl)lysine cross-linking between gamma chains (stronger) and between alpha chains (weaker) of different monomers.</text>
</comment>
<comment type="PTM">
    <text>Forms F13A-mediated cross-links between a glutamine and the epsilon-amino group of a lysine residue, forming fibronectin-fibrinogen heteropolymers.</text>
</comment>
<dbReference type="GO" id="GO:0005576">
    <property type="term" value="C:extracellular region"/>
    <property type="evidence" value="ECO:0007669"/>
    <property type="project" value="UniProtKB-SubCell"/>
</dbReference>
<dbReference type="GO" id="GO:0002250">
    <property type="term" value="P:adaptive immune response"/>
    <property type="evidence" value="ECO:0007669"/>
    <property type="project" value="UniProtKB-KW"/>
</dbReference>
<dbReference type="GO" id="GO:0007596">
    <property type="term" value="P:blood coagulation"/>
    <property type="evidence" value="ECO:0007669"/>
    <property type="project" value="UniProtKB-KW"/>
</dbReference>
<dbReference type="GO" id="GO:0045087">
    <property type="term" value="P:innate immune response"/>
    <property type="evidence" value="ECO:0007669"/>
    <property type="project" value="UniProtKB-KW"/>
</dbReference>
<reference key="1">
    <citation type="journal article" date="1973" name="Syst. Zool.">
        <title>Mammalian phylogeny based on fibrinopeptide amino acid sequences.</title>
        <authorList>
            <person name="O'Neil P.B."/>
            <person name="Doolittle R.F."/>
        </authorList>
    </citation>
    <scope>PROTEIN SEQUENCE</scope>
</reference>
<keyword id="KW-1064">Adaptive immunity</keyword>
<keyword id="KW-0094">Blood coagulation</keyword>
<keyword id="KW-0175">Coiled coil</keyword>
<keyword id="KW-0903">Direct protein sequencing</keyword>
<keyword id="KW-1015">Disulfide bond</keyword>
<keyword id="KW-0356">Hemostasis</keyword>
<keyword id="KW-0391">Immunity</keyword>
<keyword id="KW-0399">Innate immunity</keyword>
<keyword id="KW-0964">Secreted</keyword>
<evidence type="ECO:0000250" key="1">
    <source>
        <dbReference type="UniProtKB" id="E9PV24"/>
    </source>
</evidence>
<evidence type="ECO:0000250" key="2">
    <source>
        <dbReference type="UniProtKB" id="P02671"/>
    </source>
</evidence>
<protein>
    <recommendedName>
        <fullName>Fibrinogen alpha chain</fullName>
    </recommendedName>
    <component>
        <recommendedName>
            <fullName>Fibrinopeptide A</fullName>
        </recommendedName>
    </component>
</protein>
<accession>P14536</accession>
<name>FIBA_TAPTE</name>
<feature type="peptide" id="PRO_0000009042" description="Fibrinopeptide A">
    <location>
        <begin position="1"/>
        <end position="16"/>
    </location>
</feature>
<feature type="non-terminal residue">
    <location>
        <position position="16"/>
    </location>
</feature>